<keyword id="KW-0030">Aminoacyl-tRNA synthetase</keyword>
<keyword id="KW-0067">ATP-binding</keyword>
<keyword id="KW-0963">Cytoplasm</keyword>
<keyword id="KW-0436">Ligase</keyword>
<keyword id="KW-0479">Metal-binding</keyword>
<keyword id="KW-0547">Nucleotide-binding</keyword>
<keyword id="KW-0648">Protein biosynthesis</keyword>
<keyword id="KW-0862">Zinc</keyword>
<organism>
    <name type="scientific">Klebsiella pneumoniae subsp. pneumoniae (strain ATCC 700721 / MGH 78578)</name>
    <dbReference type="NCBI Taxonomy" id="272620"/>
    <lineage>
        <taxon>Bacteria</taxon>
        <taxon>Pseudomonadati</taxon>
        <taxon>Pseudomonadota</taxon>
        <taxon>Gammaproteobacteria</taxon>
        <taxon>Enterobacterales</taxon>
        <taxon>Enterobacteriaceae</taxon>
        <taxon>Klebsiella/Raoultella group</taxon>
        <taxon>Klebsiella</taxon>
        <taxon>Klebsiella pneumoniae complex</taxon>
    </lineage>
</organism>
<proteinExistence type="inferred from homology"/>
<feature type="chain" id="PRO_1000001910" description="Glutamate--tRNA ligase">
    <location>
        <begin position="1"/>
        <end position="472"/>
    </location>
</feature>
<feature type="short sequence motif" description="'HIGH' region" evidence="1">
    <location>
        <begin position="9"/>
        <end position="19"/>
    </location>
</feature>
<feature type="short sequence motif" description="'KMSKS' region" evidence="1">
    <location>
        <begin position="237"/>
        <end position="241"/>
    </location>
</feature>
<feature type="binding site" evidence="1">
    <location>
        <position position="98"/>
    </location>
    <ligand>
        <name>Zn(2+)</name>
        <dbReference type="ChEBI" id="CHEBI:29105"/>
    </ligand>
</feature>
<feature type="binding site" evidence="1">
    <location>
        <position position="100"/>
    </location>
    <ligand>
        <name>Zn(2+)</name>
        <dbReference type="ChEBI" id="CHEBI:29105"/>
    </ligand>
</feature>
<feature type="binding site" evidence="1">
    <location>
        <position position="125"/>
    </location>
    <ligand>
        <name>Zn(2+)</name>
        <dbReference type="ChEBI" id="CHEBI:29105"/>
    </ligand>
</feature>
<feature type="binding site" evidence="1">
    <location>
        <position position="127"/>
    </location>
    <ligand>
        <name>Zn(2+)</name>
        <dbReference type="ChEBI" id="CHEBI:29105"/>
    </ligand>
</feature>
<feature type="binding site" evidence="1">
    <location>
        <position position="240"/>
    </location>
    <ligand>
        <name>ATP</name>
        <dbReference type="ChEBI" id="CHEBI:30616"/>
    </ligand>
</feature>
<name>SYE_KLEP7</name>
<protein>
    <recommendedName>
        <fullName evidence="1">Glutamate--tRNA ligase</fullName>
        <ecNumber evidence="1">6.1.1.17</ecNumber>
    </recommendedName>
    <alternativeName>
        <fullName evidence="1">Glutamyl-tRNA synthetase</fullName>
        <shortName evidence="1">GluRS</shortName>
    </alternativeName>
</protein>
<accession>A6TC43</accession>
<comment type="function">
    <text evidence="1">Catalyzes the attachment of glutamate to tRNA(Glu) in a two-step reaction: glutamate is first activated by ATP to form Glu-AMP and then transferred to the acceptor end of tRNA(Glu).</text>
</comment>
<comment type="catalytic activity">
    <reaction evidence="1">
        <text>tRNA(Glu) + L-glutamate + ATP = L-glutamyl-tRNA(Glu) + AMP + diphosphate</text>
        <dbReference type="Rhea" id="RHEA:23540"/>
        <dbReference type="Rhea" id="RHEA-COMP:9663"/>
        <dbReference type="Rhea" id="RHEA-COMP:9680"/>
        <dbReference type="ChEBI" id="CHEBI:29985"/>
        <dbReference type="ChEBI" id="CHEBI:30616"/>
        <dbReference type="ChEBI" id="CHEBI:33019"/>
        <dbReference type="ChEBI" id="CHEBI:78442"/>
        <dbReference type="ChEBI" id="CHEBI:78520"/>
        <dbReference type="ChEBI" id="CHEBI:456215"/>
        <dbReference type="EC" id="6.1.1.17"/>
    </reaction>
</comment>
<comment type="cofactor">
    <cofactor evidence="1">
        <name>Zn(2+)</name>
        <dbReference type="ChEBI" id="CHEBI:29105"/>
    </cofactor>
    <text evidence="1">Binds 1 zinc ion per subunit.</text>
</comment>
<comment type="subunit">
    <text evidence="1">Monomer.</text>
</comment>
<comment type="subcellular location">
    <subcellularLocation>
        <location evidence="1">Cytoplasm</location>
    </subcellularLocation>
</comment>
<comment type="similarity">
    <text evidence="1">Belongs to the class-I aminoacyl-tRNA synthetase family. Glutamate--tRNA ligase type 1 subfamily.</text>
</comment>
<reference key="1">
    <citation type="submission" date="2006-09" db="EMBL/GenBank/DDBJ databases">
        <authorList>
            <consortium name="The Klebsiella pneumonia Genome Sequencing Project"/>
            <person name="McClelland M."/>
            <person name="Sanderson E.K."/>
            <person name="Spieth J."/>
            <person name="Clifton W.S."/>
            <person name="Latreille P."/>
            <person name="Sabo A."/>
            <person name="Pepin K."/>
            <person name="Bhonagiri V."/>
            <person name="Porwollik S."/>
            <person name="Ali J."/>
            <person name="Wilson R.K."/>
        </authorList>
    </citation>
    <scope>NUCLEOTIDE SEQUENCE [LARGE SCALE GENOMIC DNA]</scope>
    <source>
        <strain>ATCC 700721 / MGH 78578</strain>
    </source>
</reference>
<evidence type="ECO:0000255" key="1">
    <source>
        <dbReference type="HAMAP-Rule" id="MF_00022"/>
    </source>
</evidence>
<gene>
    <name evidence="1" type="primary">gltX</name>
    <name type="ordered locus">KPN78578_27030</name>
    <name type="ORF">KPN_02750</name>
</gene>
<dbReference type="EC" id="6.1.1.17" evidence="1"/>
<dbReference type="EMBL" id="CP000647">
    <property type="protein sequence ID" value="ABR78164.1"/>
    <property type="molecule type" value="Genomic_DNA"/>
</dbReference>
<dbReference type="RefSeq" id="WP_015958780.1">
    <property type="nucleotide sequence ID" value="NC_009648.1"/>
</dbReference>
<dbReference type="SMR" id="A6TC43"/>
<dbReference type="STRING" id="272620.KPN_02750"/>
<dbReference type="jPOST" id="A6TC43"/>
<dbReference type="PaxDb" id="272620-KPN_02750"/>
<dbReference type="EnsemblBacteria" id="ABR78164">
    <property type="protein sequence ID" value="ABR78164"/>
    <property type="gene ID" value="KPN_02750"/>
</dbReference>
<dbReference type="KEGG" id="kpn:KPN_02750"/>
<dbReference type="HOGENOM" id="CLU_015768_6_0_6"/>
<dbReference type="Proteomes" id="UP000000265">
    <property type="component" value="Chromosome"/>
</dbReference>
<dbReference type="GO" id="GO:0005829">
    <property type="term" value="C:cytosol"/>
    <property type="evidence" value="ECO:0007669"/>
    <property type="project" value="TreeGrafter"/>
</dbReference>
<dbReference type="GO" id="GO:0005524">
    <property type="term" value="F:ATP binding"/>
    <property type="evidence" value="ECO:0007669"/>
    <property type="project" value="UniProtKB-UniRule"/>
</dbReference>
<dbReference type="GO" id="GO:0004818">
    <property type="term" value="F:glutamate-tRNA ligase activity"/>
    <property type="evidence" value="ECO:0007669"/>
    <property type="project" value="UniProtKB-UniRule"/>
</dbReference>
<dbReference type="GO" id="GO:0000049">
    <property type="term" value="F:tRNA binding"/>
    <property type="evidence" value="ECO:0007669"/>
    <property type="project" value="InterPro"/>
</dbReference>
<dbReference type="GO" id="GO:0008270">
    <property type="term" value="F:zinc ion binding"/>
    <property type="evidence" value="ECO:0007669"/>
    <property type="project" value="UniProtKB-UniRule"/>
</dbReference>
<dbReference type="GO" id="GO:0006424">
    <property type="term" value="P:glutamyl-tRNA aminoacylation"/>
    <property type="evidence" value="ECO:0007669"/>
    <property type="project" value="UniProtKB-UniRule"/>
</dbReference>
<dbReference type="CDD" id="cd00808">
    <property type="entry name" value="GluRS_core"/>
    <property type="match status" value="1"/>
</dbReference>
<dbReference type="FunFam" id="1.10.10.350:FF:000001">
    <property type="entry name" value="Glutamate--tRNA ligase"/>
    <property type="match status" value="1"/>
</dbReference>
<dbReference type="FunFam" id="3.40.50.620:FF:000007">
    <property type="entry name" value="Glutamate--tRNA ligase"/>
    <property type="match status" value="1"/>
</dbReference>
<dbReference type="Gene3D" id="1.10.10.350">
    <property type="match status" value="1"/>
</dbReference>
<dbReference type="Gene3D" id="3.40.50.620">
    <property type="entry name" value="HUPs"/>
    <property type="match status" value="1"/>
</dbReference>
<dbReference type="HAMAP" id="MF_00022">
    <property type="entry name" value="Glu_tRNA_synth_type1"/>
    <property type="match status" value="1"/>
</dbReference>
<dbReference type="InterPro" id="IPR045462">
    <property type="entry name" value="aa-tRNA-synth_I_cd-bd"/>
</dbReference>
<dbReference type="InterPro" id="IPR020751">
    <property type="entry name" value="aa-tRNA-synth_I_codon-bd_sub2"/>
</dbReference>
<dbReference type="InterPro" id="IPR001412">
    <property type="entry name" value="aa-tRNA-synth_I_CS"/>
</dbReference>
<dbReference type="InterPro" id="IPR008925">
    <property type="entry name" value="aa_tRNA-synth_I_cd-bd_sf"/>
</dbReference>
<dbReference type="InterPro" id="IPR004527">
    <property type="entry name" value="Glu-tRNA-ligase_bac/mito"/>
</dbReference>
<dbReference type="InterPro" id="IPR000924">
    <property type="entry name" value="Glu/Gln-tRNA-synth"/>
</dbReference>
<dbReference type="InterPro" id="IPR020058">
    <property type="entry name" value="Glu/Gln-tRNA-synth_Ib_cat-dom"/>
</dbReference>
<dbReference type="InterPro" id="IPR049940">
    <property type="entry name" value="GluQ/Sye"/>
</dbReference>
<dbReference type="InterPro" id="IPR033910">
    <property type="entry name" value="GluRS_core"/>
</dbReference>
<dbReference type="InterPro" id="IPR014729">
    <property type="entry name" value="Rossmann-like_a/b/a_fold"/>
</dbReference>
<dbReference type="NCBIfam" id="TIGR00464">
    <property type="entry name" value="gltX_bact"/>
    <property type="match status" value="1"/>
</dbReference>
<dbReference type="PANTHER" id="PTHR43311">
    <property type="entry name" value="GLUTAMATE--TRNA LIGASE"/>
    <property type="match status" value="1"/>
</dbReference>
<dbReference type="PANTHER" id="PTHR43311:SF2">
    <property type="entry name" value="GLUTAMATE--TRNA LIGASE, MITOCHONDRIAL-RELATED"/>
    <property type="match status" value="1"/>
</dbReference>
<dbReference type="Pfam" id="PF19269">
    <property type="entry name" value="Anticodon_2"/>
    <property type="match status" value="1"/>
</dbReference>
<dbReference type="Pfam" id="PF00749">
    <property type="entry name" value="tRNA-synt_1c"/>
    <property type="match status" value="1"/>
</dbReference>
<dbReference type="PRINTS" id="PR00987">
    <property type="entry name" value="TRNASYNTHGLU"/>
</dbReference>
<dbReference type="SUPFAM" id="SSF48163">
    <property type="entry name" value="An anticodon-binding domain of class I aminoacyl-tRNA synthetases"/>
    <property type="match status" value="1"/>
</dbReference>
<dbReference type="SUPFAM" id="SSF52374">
    <property type="entry name" value="Nucleotidylyl transferase"/>
    <property type="match status" value="1"/>
</dbReference>
<dbReference type="PROSITE" id="PS00178">
    <property type="entry name" value="AA_TRNA_LIGASE_I"/>
    <property type="match status" value="1"/>
</dbReference>
<sequence>MKIKTRFAPSPTGYLHVGGARTALYSWLFARNHGGEFVLRIEDTDLERSTPEAIEAIMDGMNWLNLQWDEGPYFQTKRFDRYNNVIDEMLEAGTAYKCYCSKERLEALREEQMAKGEKPRYDGRCRHSHEHHADDEPCVVRFANPQQGSVIFDDQIRGPIEFSNQELDDLIIRRTDGSPTYNFCVVVDDWDMAITHVIRGEDHINNTPRQINILKALNAPVPVYAHVSMINGDDGKKLSKRHGAVSVMQYRDDGYLPEALLNYLVRLGWSHGDQEIFTREEMIEFFSLGAVSKSASAFNTDKLLWLNHHYINTLPAEYVATHLQWHIEQENIDTRNGPQLAELVKLLGERCKTLKEMAQSCRYFYEEFAEFDADAAKKHLRPVARQPLEMVRDKLAAISDWTAENVHHAIQATADELEVGMGKVGMPLRVAVTGAGQSPALDVTVHAIGKSRSVDRINKALAFIAEREGQAS</sequence>